<proteinExistence type="inferred from homology"/>
<feature type="chain" id="PRO_1000020377" description="Threonine--tRNA ligase">
    <location>
        <begin position="1"/>
        <end position="645"/>
    </location>
</feature>
<feature type="domain" description="TGS" evidence="2">
    <location>
        <begin position="1"/>
        <end position="61"/>
    </location>
</feature>
<feature type="region of interest" description="Catalytic" evidence="1">
    <location>
        <begin position="242"/>
        <end position="541"/>
    </location>
</feature>
<feature type="binding site" evidence="1">
    <location>
        <position position="337"/>
    </location>
    <ligand>
        <name>Zn(2+)</name>
        <dbReference type="ChEBI" id="CHEBI:29105"/>
    </ligand>
</feature>
<feature type="binding site" evidence="1">
    <location>
        <position position="388"/>
    </location>
    <ligand>
        <name>Zn(2+)</name>
        <dbReference type="ChEBI" id="CHEBI:29105"/>
    </ligand>
</feature>
<feature type="binding site" evidence="1">
    <location>
        <position position="518"/>
    </location>
    <ligand>
        <name>Zn(2+)</name>
        <dbReference type="ChEBI" id="CHEBI:29105"/>
    </ligand>
</feature>
<sequence length="645" mass="73543">MIKITLPDGSIREYEKGITSMGIALSISEGLARNVLAAKVNGEIWDASRAITSDSTVQLLTWNDTEGKSTFWHSSAHLLAEALEALYPGTKFGIGPAIETGFYYDVDFGDRAFSQDDFENIEKKVLELAKQKNAYIRKEISKKDAVAYFTDKQDPYKLDLLEGLSDGSITFYKQGAFTDLCRGPHIPDTGFIKAVKLMSVAGAYWRGDEKSKQLTRIYGVTFPKQQELKDYLTILEEAKKRDHRKLGKELELFAFSEKVGMGLPLWLPKGALLRERLENFLKKAQVRAGYQPVVTPHIGNKQLYVTSGHFDKYGKDSFQPIFTPHEGEQFLLKPMNCPHHCEIYKTKPRSYKDLPIRFAEFGTVYRYEQSGELHGLTRVRGFTQDDAHIFCRPDQVKEEFLKVIDLVLYVFKVLGFNDYTAQISLRDPENKDKYIGEDEQWQKAEQAIIEASAEKGLSTVTELGEAAFYGPKLDFMVKDALGRKWQLGTIQVDYQLPNRFELEYTGSDNQKHRPVMLHRAPFGSLERFIAVLIEHVAGNFPLWLSPDQIAILPISEKFNDYAQDVYDRLLVKDIRGFIDNRDEKIGKKIRDTEVKKVPFMLVIGEKEVNEGKIAIRKHGGEDLGSMLVEDFIQYFESEIAKQLAV</sequence>
<reference key="1">
    <citation type="journal article" date="2007" name="Appl. Environ. Microbiol.">
        <title>Genome sequence of the cellulolytic gliding bacterium Cytophaga hutchinsonii.</title>
        <authorList>
            <person name="Xie G."/>
            <person name="Bruce D.C."/>
            <person name="Challacombe J.F."/>
            <person name="Chertkov O."/>
            <person name="Detter J.C."/>
            <person name="Gilna P."/>
            <person name="Han C.S."/>
            <person name="Lucas S."/>
            <person name="Misra M."/>
            <person name="Myers G.L."/>
            <person name="Richardson P."/>
            <person name="Tapia R."/>
            <person name="Thayer N."/>
            <person name="Thompson L.S."/>
            <person name="Brettin T.S."/>
            <person name="Henrissat B."/>
            <person name="Wilson D.B."/>
            <person name="McBride M.J."/>
        </authorList>
    </citation>
    <scope>NUCLEOTIDE SEQUENCE [LARGE SCALE GENOMIC DNA]</scope>
    <source>
        <strain>ATCC 33406 / DSM 1761 / JCM 20678 / CIP 103989 / IAM 12607 / NBRC 15051 / NCIMB 9469 / D465</strain>
    </source>
</reference>
<keyword id="KW-0030">Aminoacyl-tRNA synthetase</keyword>
<keyword id="KW-0067">ATP-binding</keyword>
<keyword id="KW-0963">Cytoplasm</keyword>
<keyword id="KW-0436">Ligase</keyword>
<keyword id="KW-0479">Metal-binding</keyword>
<keyword id="KW-0547">Nucleotide-binding</keyword>
<keyword id="KW-0648">Protein biosynthesis</keyword>
<keyword id="KW-1185">Reference proteome</keyword>
<keyword id="KW-0694">RNA-binding</keyword>
<keyword id="KW-0820">tRNA-binding</keyword>
<keyword id="KW-0862">Zinc</keyword>
<protein>
    <recommendedName>
        <fullName evidence="1">Threonine--tRNA ligase</fullName>
        <ecNumber evidence="1">6.1.1.3</ecNumber>
    </recommendedName>
    <alternativeName>
        <fullName evidence="1">Threonyl-tRNA synthetase</fullName>
        <shortName evidence="1">ThrRS</shortName>
    </alternativeName>
</protein>
<evidence type="ECO:0000255" key="1">
    <source>
        <dbReference type="HAMAP-Rule" id="MF_00184"/>
    </source>
</evidence>
<evidence type="ECO:0000255" key="2">
    <source>
        <dbReference type="PROSITE-ProRule" id="PRU01228"/>
    </source>
</evidence>
<organism>
    <name type="scientific">Cytophaga hutchinsonii (strain ATCC 33406 / DSM 1761 / CIP 103989 / NBRC 15051 / NCIMB 9469 / D465)</name>
    <dbReference type="NCBI Taxonomy" id="269798"/>
    <lineage>
        <taxon>Bacteria</taxon>
        <taxon>Pseudomonadati</taxon>
        <taxon>Bacteroidota</taxon>
        <taxon>Cytophagia</taxon>
        <taxon>Cytophagales</taxon>
        <taxon>Cytophagaceae</taxon>
        <taxon>Cytophaga</taxon>
    </lineage>
</organism>
<gene>
    <name evidence="1" type="primary">thrS</name>
    <name type="ordered locus">CHU_1643</name>
</gene>
<name>SYT_CYTH3</name>
<comment type="function">
    <text evidence="1">Catalyzes the attachment of threonine to tRNA(Thr) in a two-step reaction: L-threonine is first activated by ATP to form Thr-AMP and then transferred to the acceptor end of tRNA(Thr). Also edits incorrectly charged L-seryl-tRNA(Thr).</text>
</comment>
<comment type="catalytic activity">
    <reaction evidence="1">
        <text>tRNA(Thr) + L-threonine + ATP = L-threonyl-tRNA(Thr) + AMP + diphosphate + H(+)</text>
        <dbReference type="Rhea" id="RHEA:24624"/>
        <dbReference type="Rhea" id="RHEA-COMP:9670"/>
        <dbReference type="Rhea" id="RHEA-COMP:9704"/>
        <dbReference type="ChEBI" id="CHEBI:15378"/>
        <dbReference type="ChEBI" id="CHEBI:30616"/>
        <dbReference type="ChEBI" id="CHEBI:33019"/>
        <dbReference type="ChEBI" id="CHEBI:57926"/>
        <dbReference type="ChEBI" id="CHEBI:78442"/>
        <dbReference type="ChEBI" id="CHEBI:78534"/>
        <dbReference type="ChEBI" id="CHEBI:456215"/>
        <dbReference type="EC" id="6.1.1.3"/>
    </reaction>
</comment>
<comment type="cofactor">
    <cofactor evidence="1">
        <name>Zn(2+)</name>
        <dbReference type="ChEBI" id="CHEBI:29105"/>
    </cofactor>
    <text evidence="1">Binds 1 zinc ion per subunit.</text>
</comment>
<comment type="subunit">
    <text evidence="1">Homodimer.</text>
</comment>
<comment type="subcellular location">
    <subcellularLocation>
        <location evidence="1">Cytoplasm</location>
    </subcellularLocation>
</comment>
<comment type="similarity">
    <text evidence="1">Belongs to the class-II aminoacyl-tRNA synthetase family.</text>
</comment>
<accession>Q11UK3</accession>
<dbReference type="EC" id="6.1.1.3" evidence="1"/>
<dbReference type="EMBL" id="CP000383">
    <property type="protein sequence ID" value="ABG58912.1"/>
    <property type="molecule type" value="Genomic_DNA"/>
</dbReference>
<dbReference type="RefSeq" id="WP_011585028.1">
    <property type="nucleotide sequence ID" value="NC_008255.1"/>
</dbReference>
<dbReference type="SMR" id="Q11UK3"/>
<dbReference type="STRING" id="269798.CHU_1643"/>
<dbReference type="KEGG" id="chu:CHU_1643"/>
<dbReference type="eggNOG" id="COG0441">
    <property type="taxonomic scope" value="Bacteria"/>
</dbReference>
<dbReference type="HOGENOM" id="CLU_008554_0_1_10"/>
<dbReference type="OrthoDB" id="9802304at2"/>
<dbReference type="Proteomes" id="UP000001822">
    <property type="component" value="Chromosome"/>
</dbReference>
<dbReference type="GO" id="GO:0005737">
    <property type="term" value="C:cytoplasm"/>
    <property type="evidence" value="ECO:0007669"/>
    <property type="project" value="UniProtKB-SubCell"/>
</dbReference>
<dbReference type="GO" id="GO:0005524">
    <property type="term" value="F:ATP binding"/>
    <property type="evidence" value="ECO:0007669"/>
    <property type="project" value="UniProtKB-UniRule"/>
</dbReference>
<dbReference type="GO" id="GO:0046872">
    <property type="term" value="F:metal ion binding"/>
    <property type="evidence" value="ECO:0007669"/>
    <property type="project" value="UniProtKB-KW"/>
</dbReference>
<dbReference type="GO" id="GO:0004829">
    <property type="term" value="F:threonine-tRNA ligase activity"/>
    <property type="evidence" value="ECO:0007669"/>
    <property type="project" value="UniProtKB-UniRule"/>
</dbReference>
<dbReference type="GO" id="GO:0000049">
    <property type="term" value="F:tRNA binding"/>
    <property type="evidence" value="ECO:0007669"/>
    <property type="project" value="UniProtKB-KW"/>
</dbReference>
<dbReference type="GO" id="GO:0006435">
    <property type="term" value="P:threonyl-tRNA aminoacylation"/>
    <property type="evidence" value="ECO:0007669"/>
    <property type="project" value="UniProtKB-UniRule"/>
</dbReference>
<dbReference type="CDD" id="cd01667">
    <property type="entry name" value="TGS_ThrRS"/>
    <property type="match status" value="1"/>
</dbReference>
<dbReference type="CDD" id="cd00860">
    <property type="entry name" value="ThrRS_anticodon"/>
    <property type="match status" value="1"/>
</dbReference>
<dbReference type="CDD" id="cd00771">
    <property type="entry name" value="ThrRS_core"/>
    <property type="match status" value="1"/>
</dbReference>
<dbReference type="FunFam" id="3.10.20.30:FF:000005">
    <property type="entry name" value="Threonine--tRNA ligase"/>
    <property type="match status" value="1"/>
</dbReference>
<dbReference type="FunFam" id="3.30.54.20:FF:000002">
    <property type="entry name" value="Threonine--tRNA ligase"/>
    <property type="match status" value="1"/>
</dbReference>
<dbReference type="FunFam" id="3.30.930.10:FF:000002">
    <property type="entry name" value="Threonine--tRNA ligase"/>
    <property type="match status" value="1"/>
</dbReference>
<dbReference type="FunFam" id="3.40.50.800:FF:000001">
    <property type="entry name" value="Threonine--tRNA ligase"/>
    <property type="match status" value="1"/>
</dbReference>
<dbReference type="FunFam" id="3.30.980.10:FF:000005">
    <property type="entry name" value="Threonyl-tRNA synthetase, mitochondrial"/>
    <property type="match status" value="1"/>
</dbReference>
<dbReference type="Gene3D" id="3.10.20.30">
    <property type="match status" value="1"/>
</dbReference>
<dbReference type="Gene3D" id="3.30.54.20">
    <property type="match status" value="1"/>
</dbReference>
<dbReference type="Gene3D" id="3.40.50.800">
    <property type="entry name" value="Anticodon-binding domain"/>
    <property type="match status" value="1"/>
</dbReference>
<dbReference type="Gene3D" id="3.30.930.10">
    <property type="entry name" value="Bira Bifunctional Protein, Domain 2"/>
    <property type="match status" value="1"/>
</dbReference>
<dbReference type="Gene3D" id="3.30.980.10">
    <property type="entry name" value="Threonyl-trna Synthetase, Chain A, domain 2"/>
    <property type="match status" value="1"/>
</dbReference>
<dbReference type="HAMAP" id="MF_00184">
    <property type="entry name" value="Thr_tRNA_synth"/>
    <property type="match status" value="1"/>
</dbReference>
<dbReference type="InterPro" id="IPR002314">
    <property type="entry name" value="aa-tRNA-synt_IIb"/>
</dbReference>
<dbReference type="InterPro" id="IPR006195">
    <property type="entry name" value="aa-tRNA-synth_II"/>
</dbReference>
<dbReference type="InterPro" id="IPR045864">
    <property type="entry name" value="aa-tRNA-synth_II/BPL/LPL"/>
</dbReference>
<dbReference type="InterPro" id="IPR004154">
    <property type="entry name" value="Anticodon-bd"/>
</dbReference>
<dbReference type="InterPro" id="IPR036621">
    <property type="entry name" value="Anticodon-bd_dom_sf"/>
</dbReference>
<dbReference type="InterPro" id="IPR012675">
    <property type="entry name" value="Beta-grasp_dom_sf"/>
</dbReference>
<dbReference type="InterPro" id="IPR004095">
    <property type="entry name" value="TGS"/>
</dbReference>
<dbReference type="InterPro" id="IPR012676">
    <property type="entry name" value="TGS-like"/>
</dbReference>
<dbReference type="InterPro" id="IPR002320">
    <property type="entry name" value="Thr-tRNA-ligase_IIa"/>
</dbReference>
<dbReference type="InterPro" id="IPR018163">
    <property type="entry name" value="Thr/Ala-tRNA-synth_IIc_edit"/>
</dbReference>
<dbReference type="InterPro" id="IPR047246">
    <property type="entry name" value="ThrRS_anticodon"/>
</dbReference>
<dbReference type="InterPro" id="IPR033728">
    <property type="entry name" value="ThrRS_core"/>
</dbReference>
<dbReference type="InterPro" id="IPR012947">
    <property type="entry name" value="tRNA_SAD"/>
</dbReference>
<dbReference type="NCBIfam" id="TIGR00418">
    <property type="entry name" value="thrS"/>
    <property type="match status" value="1"/>
</dbReference>
<dbReference type="PANTHER" id="PTHR11451:SF44">
    <property type="entry name" value="THREONINE--TRNA LIGASE, CHLOROPLASTIC_MITOCHONDRIAL 2"/>
    <property type="match status" value="1"/>
</dbReference>
<dbReference type="PANTHER" id="PTHR11451">
    <property type="entry name" value="THREONINE-TRNA LIGASE"/>
    <property type="match status" value="1"/>
</dbReference>
<dbReference type="Pfam" id="PF03129">
    <property type="entry name" value="HGTP_anticodon"/>
    <property type="match status" value="1"/>
</dbReference>
<dbReference type="Pfam" id="PF02824">
    <property type="entry name" value="TGS"/>
    <property type="match status" value="1"/>
</dbReference>
<dbReference type="Pfam" id="PF00587">
    <property type="entry name" value="tRNA-synt_2b"/>
    <property type="match status" value="1"/>
</dbReference>
<dbReference type="Pfam" id="PF07973">
    <property type="entry name" value="tRNA_SAD"/>
    <property type="match status" value="1"/>
</dbReference>
<dbReference type="PRINTS" id="PR01047">
    <property type="entry name" value="TRNASYNTHTHR"/>
</dbReference>
<dbReference type="SMART" id="SM00863">
    <property type="entry name" value="tRNA_SAD"/>
    <property type="match status" value="1"/>
</dbReference>
<dbReference type="SUPFAM" id="SSF52954">
    <property type="entry name" value="Class II aaRS ABD-related"/>
    <property type="match status" value="1"/>
</dbReference>
<dbReference type="SUPFAM" id="SSF55681">
    <property type="entry name" value="Class II aaRS and biotin synthetases"/>
    <property type="match status" value="1"/>
</dbReference>
<dbReference type="SUPFAM" id="SSF81271">
    <property type="entry name" value="TGS-like"/>
    <property type="match status" value="1"/>
</dbReference>
<dbReference type="SUPFAM" id="SSF55186">
    <property type="entry name" value="ThrRS/AlaRS common domain"/>
    <property type="match status" value="1"/>
</dbReference>
<dbReference type="PROSITE" id="PS50862">
    <property type="entry name" value="AA_TRNA_LIGASE_II"/>
    <property type="match status" value="1"/>
</dbReference>
<dbReference type="PROSITE" id="PS51880">
    <property type="entry name" value="TGS"/>
    <property type="match status" value="1"/>
</dbReference>